<sequence>MRRFFYRHSRGVTEVVVGSGLQYGDYVERPVVLAEEGLRPPIPGAPTLALRGGEEVKSLEVLTKVYGFLKEVGADRSTTLVAVGGGALLDLATFAAGTYMRGIRLVHIPTTLLAMVDAALGGKGAVDWGPVKNLIGVFYQPAAILCDLSWLGTLPERVYRSAFAEVVKYGLALDGDFYSWVRENAKALLARDGGALEYAVYRSLQLKAGVVEVDEFEERGVRQVLNVGHTVGHAVERVLGLLHGEAVAVGMVAELRLSSELGYLRESHVAEAAEVLSSLGLPTSVKATEQQLAEAAALVKFDKKRRGGHIYIPLVVRPGRWILEKIAVEEVEKAVRYVLRQGG</sequence>
<gene>
    <name evidence="1" type="primary">aroB</name>
    <name type="ordered locus">Tneu_0788</name>
</gene>
<protein>
    <recommendedName>
        <fullName evidence="1">3-dehydroquinate synthase</fullName>
        <shortName evidence="1">DHQS</shortName>
        <ecNumber evidence="1">4.2.3.4</ecNumber>
    </recommendedName>
</protein>
<dbReference type="EC" id="4.2.3.4" evidence="1"/>
<dbReference type="EMBL" id="CP001014">
    <property type="protein sequence ID" value="ACB39727.1"/>
    <property type="molecule type" value="Genomic_DNA"/>
</dbReference>
<dbReference type="RefSeq" id="WP_012350147.1">
    <property type="nucleotide sequence ID" value="NC_010525.1"/>
</dbReference>
<dbReference type="SMR" id="B1YD64"/>
<dbReference type="STRING" id="444157.Tneu_0788"/>
<dbReference type="GeneID" id="6164698"/>
<dbReference type="KEGG" id="tne:Tneu_0788"/>
<dbReference type="eggNOG" id="arCOG00983">
    <property type="taxonomic scope" value="Archaea"/>
</dbReference>
<dbReference type="HOGENOM" id="CLU_001201_0_1_2"/>
<dbReference type="OrthoDB" id="21407at2157"/>
<dbReference type="UniPathway" id="UPA00053">
    <property type="reaction ID" value="UER00085"/>
</dbReference>
<dbReference type="Proteomes" id="UP000001694">
    <property type="component" value="Chromosome"/>
</dbReference>
<dbReference type="GO" id="GO:0005737">
    <property type="term" value="C:cytoplasm"/>
    <property type="evidence" value="ECO:0007669"/>
    <property type="project" value="UniProtKB-SubCell"/>
</dbReference>
<dbReference type="GO" id="GO:0003856">
    <property type="term" value="F:3-dehydroquinate synthase activity"/>
    <property type="evidence" value="ECO:0007669"/>
    <property type="project" value="UniProtKB-UniRule"/>
</dbReference>
<dbReference type="GO" id="GO:0046872">
    <property type="term" value="F:metal ion binding"/>
    <property type="evidence" value="ECO:0007669"/>
    <property type="project" value="UniProtKB-KW"/>
</dbReference>
<dbReference type="GO" id="GO:0000166">
    <property type="term" value="F:nucleotide binding"/>
    <property type="evidence" value="ECO:0007669"/>
    <property type="project" value="UniProtKB-KW"/>
</dbReference>
<dbReference type="GO" id="GO:0008652">
    <property type="term" value="P:amino acid biosynthetic process"/>
    <property type="evidence" value="ECO:0007669"/>
    <property type="project" value="UniProtKB-KW"/>
</dbReference>
<dbReference type="GO" id="GO:0009073">
    <property type="term" value="P:aromatic amino acid family biosynthetic process"/>
    <property type="evidence" value="ECO:0007669"/>
    <property type="project" value="UniProtKB-KW"/>
</dbReference>
<dbReference type="GO" id="GO:0009423">
    <property type="term" value="P:chorismate biosynthetic process"/>
    <property type="evidence" value="ECO:0007669"/>
    <property type="project" value="UniProtKB-UniRule"/>
</dbReference>
<dbReference type="CDD" id="cd08195">
    <property type="entry name" value="DHQS"/>
    <property type="match status" value="1"/>
</dbReference>
<dbReference type="Gene3D" id="3.40.50.1970">
    <property type="match status" value="1"/>
</dbReference>
<dbReference type="Gene3D" id="1.20.1090.10">
    <property type="entry name" value="Dehydroquinate synthase-like - alpha domain"/>
    <property type="match status" value="1"/>
</dbReference>
<dbReference type="HAMAP" id="MF_00110">
    <property type="entry name" value="DHQ_synthase"/>
    <property type="match status" value="1"/>
</dbReference>
<dbReference type="InterPro" id="IPR050071">
    <property type="entry name" value="Dehydroquinate_synthase"/>
</dbReference>
<dbReference type="InterPro" id="IPR016037">
    <property type="entry name" value="DHQ_synth_AroB"/>
</dbReference>
<dbReference type="InterPro" id="IPR030963">
    <property type="entry name" value="DHQ_synth_fam"/>
</dbReference>
<dbReference type="InterPro" id="IPR030960">
    <property type="entry name" value="DHQS/DOIS_N"/>
</dbReference>
<dbReference type="InterPro" id="IPR056179">
    <property type="entry name" value="DHQS_C"/>
</dbReference>
<dbReference type="PANTHER" id="PTHR43622">
    <property type="entry name" value="3-DEHYDROQUINATE SYNTHASE"/>
    <property type="match status" value="1"/>
</dbReference>
<dbReference type="PANTHER" id="PTHR43622:SF1">
    <property type="entry name" value="3-DEHYDROQUINATE SYNTHASE"/>
    <property type="match status" value="1"/>
</dbReference>
<dbReference type="Pfam" id="PF01761">
    <property type="entry name" value="DHQ_synthase"/>
    <property type="match status" value="1"/>
</dbReference>
<dbReference type="Pfam" id="PF24621">
    <property type="entry name" value="DHQS_C"/>
    <property type="match status" value="1"/>
</dbReference>
<dbReference type="PIRSF" id="PIRSF001455">
    <property type="entry name" value="DHQ_synth"/>
    <property type="match status" value="1"/>
</dbReference>
<dbReference type="SUPFAM" id="SSF56796">
    <property type="entry name" value="Dehydroquinate synthase-like"/>
    <property type="match status" value="1"/>
</dbReference>
<name>AROB_PYRNV</name>
<evidence type="ECO:0000255" key="1">
    <source>
        <dbReference type="HAMAP-Rule" id="MF_00110"/>
    </source>
</evidence>
<comment type="function">
    <text evidence="1">Catalyzes the conversion of 3-deoxy-D-arabino-heptulosonate 7-phosphate (DAHP) to dehydroquinate (DHQ).</text>
</comment>
<comment type="catalytic activity">
    <reaction evidence="1">
        <text>7-phospho-2-dehydro-3-deoxy-D-arabino-heptonate = 3-dehydroquinate + phosphate</text>
        <dbReference type="Rhea" id="RHEA:21968"/>
        <dbReference type="ChEBI" id="CHEBI:32364"/>
        <dbReference type="ChEBI" id="CHEBI:43474"/>
        <dbReference type="ChEBI" id="CHEBI:58394"/>
        <dbReference type="EC" id="4.2.3.4"/>
    </reaction>
</comment>
<comment type="cofactor">
    <cofactor evidence="1">
        <name>Co(2+)</name>
        <dbReference type="ChEBI" id="CHEBI:48828"/>
    </cofactor>
    <cofactor evidence="1">
        <name>Zn(2+)</name>
        <dbReference type="ChEBI" id="CHEBI:29105"/>
    </cofactor>
    <text evidence="1">Binds 1 divalent metal cation per subunit. Can use either Co(2+) or Zn(2+).</text>
</comment>
<comment type="cofactor">
    <cofactor evidence="1">
        <name>NAD(+)</name>
        <dbReference type="ChEBI" id="CHEBI:57540"/>
    </cofactor>
</comment>
<comment type="pathway">
    <text evidence="1">Metabolic intermediate biosynthesis; chorismate biosynthesis; chorismate from D-erythrose 4-phosphate and phosphoenolpyruvate: step 2/7.</text>
</comment>
<comment type="subcellular location">
    <subcellularLocation>
        <location evidence="1">Cytoplasm</location>
    </subcellularLocation>
</comment>
<comment type="similarity">
    <text evidence="1">Belongs to the sugar phosphate cyclases superfamily. Dehydroquinate synthase family.</text>
</comment>
<reference key="1">
    <citation type="submission" date="2008-03" db="EMBL/GenBank/DDBJ databases">
        <title>Complete sequence of Thermoproteus neutrophilus V24Sta.</title>
        <authorList>
            <consortium name="US DOE Joint Genome Institute"/>
            <person name="Copeland A."/>
            <person name="Lucas S."/>
            <person name="Lapidus A."/>
            <person name="Glavina del Rio T."/>
            <person name="Dalin E."/>
            <person name="Tice H."/>
            <person name="Bruce D."/>
            <person name="Goodwin L."/>
            <person name="Pitluck S."/>
            <person name="Sims D."/>
            <person name="Brettin T."/>
            <person name="Detter J.C."/>
            <person name="Han C."/>
            <person name="Kuske C.R."/>
            <person name="Schmutz J."/>
            <person name="Larimer F."/>
            <person name="Land M."/>
            <person name="Hauser L."/>
            <person name="Kyrpides N."/>
            <person name="Mikhailova N."/>
            <person name="Biddle J.F."/>
            <person name="Zhang Z."/>
            <person name="Fitz-Gibbon S.T."/>
            <person name="Lowe T.M."/>
            <person name="Saltikov C."/>
            <person name="House C.H."/>
            <person name="Richardson P."/>
        </authorList>
    </citation>
    <scope>NUCLEOTIDE SEQUENCE [LARGE SCALE GENOMIC DNA]</scope>
    <source>
        <strain>DSM 2338 / JCM 9278 / NBRC 100436 / V24Sta</strain>
    </source>
</reference>
<proteinExistence type="inferred from homology"/>
<organism>
    <name type="scientific">Pyrobaculum neutrophilum (strain DSM 2338 / JCM 9278 / NBRC 100436 / V24Sta)</name>
    <name type="common">Thermoproteus neutrophilus</name>
    <dbReference type="NCBI Taxonomy" id="444157"/>
    <lineage>
        <taxon>Archaea</taxon>
        <taxon>Thermoproteota</taxon>
        <taxon>Thermoprotei</taxon>
        <taxon>Thermoproteales</taxon>
        <taxon>Thermoproteaceae</taxon>
        <taxon>Pyrobaculum</taxon>
    </lineage>
</organism>
<keyword id="KW-0028">Amino-acid biosynthesis</keyword>
<keyword id="KW-0057">Aromatic amino acid biosynthesis</keyword>
<keyword id="KW-0170">Cobalt</keyword>
<keyword id="KW-0963">Cytoplasm</keyword>
<keyword id="KW-0456">Lyase</keyword>
<keyword id="KW-0479">Metal-binding</keyword>
<keyword id="KW-0520">NAD</keyword>
<keyword id="KW-0547">Nucleotide-binding</keyword>
<keyword id="KW-0862">Zinc</keyword>
<accession>B1YD64</accession>
<feature type="chain" id="PRO_1000117500" description="3-dehydroquinate synthase">
    <location>
        <begin position="1"/>
        <end position="343"/>
    </location>
</feature>
<feature type="binding site" evidence="1">
    <location>
        <begin position="86"/>
        <end position="90"/>
    </location>
    <ligand>
        <name>NAD(+)</name>
        <dbReference type="ChEBI" id="CHEBI:57540"/>
    </ligand>
</feature>
<feature type="binding site" evidence="1">
    <location>
        <begin position="110"/>
        <end position="111"/>
    </location>
    <ligand>
        <name>NAD(+)</name>
        <dbReference type="ChEBI" id="CHEBI:57540"/>
    </ligand>
</feature>
<feature type="binding site" evidence="1">
    <location>
        <position position="123"/>
    </location>
    <ligand>
        <name>NAD(+)</name>
        <dbReference type="ChEBI" id="CHEBI:57540"/>
    </ligand>
</feature>
<feature type="binding site" evidence="1">
    <location>
        <position position="132"/>
    </location>
    <ligand>
        <name>NAD(+)</name>
        <dbReference type="ChEBI" id="CHEBI:57540"/>
    </ligand>
</feature>
<feature type="binding site" evidence="1">
    <location>
        <position position="165"/>
    </location>
    <ligand>
        <name>Zn(2+)</name>
        <dbReference type="ChEBI" id="CHEBI:29105"/>
    </ligand>
</feature>
<feature type="binding site" evidence="1">
    <location>
        <position position="229"/>
    </location>
    <ligand>
        <name>Zn(2+)</name>
        <dbReference type="ChEBI" id="CHEBI:29105"/>
    </ligand>
</feature>
<feature type="binding site" evidence="1">
    <location>
        <position position="243"/>
    </location>
    <ligand>
        <name>Zn(2+)</name>
        <dbReference type="ChEBI" id="CHEBI:29105"/>
    </ligand>
</feature>